<evidence type="ECO:0000255" key="1">
    <source>
        <dbReference type="PROSITE-ProRule" id="PRU01019"/>
    </source>
</evidence>
<protein>
    <recommendedName>
        <fullName>Probable caffeoyl-CoA O-methyltransferase 2</fullName>
        <ecNumber>2.1.1.104</ecNumber>
    </recommendedName>
    <alternativeName>
        <fullName>O-methyltransferase 6</fullName>
    </alternativeName>
</protein>
<organism>
    <name type="scientific">Dictyostelium discoideum</name>
    <name type="common">Social amoeba</name>
    <dbReference type="NCBI Taxonomy" id="44689"/>
    <lineage>
        <taxon>Eukaryota</taxon>
        <taxon>Amoebozoa</taxon>
        <taxon>Evosea</taxon>
        <taxon>Eumycetozoa</taxon>
        <taxon>Dictyostelia</taxon>
        <taxon>Dictyosteliales</taxon>
        <taxon>Dictyosteliaceae</taxon>
        <taxon>Dictyostelium</taxon>
    </lineage>
</organism>
<keyword id="KW-0479">Metal-binding</keyword>
<keyword id="KW-0489">Methyltransferase</keyword>
<keyword id="KW-1185">Reference proteome</keyword>
<keyword id="KW-0949">S-adenosyl-L-methionine</keyword>
<keyword id="KW-0808">Transferase</keyword>
<comment type="catalytic activity">
    <reaction>
        <text>(E)-caffeoyl-CoA + S-adenosyl-L-methionine = (E)-feruloyl-CoA + S-adenosyl-L-homocysteine + H(+)</text>
        <dbReference type="Rhea" id="RHEA:16925"/>
        <dbReference type="ChEBI" id="CHEBI:15378"/>
        <dbReference type="ChEBI" id="CHEBI:57856"/>
        <dbReference type="ChEBI" id="CHEBI:59789"/>
        <dbReference type="ChEBI" id="CHEBI:87136"/>
        <dbReference type="ChEBI" id="CHEBI:87305"/>
        <dbReference type="EC" id="2.1.1.104"/>
    </reaction>
</comment>
<comment type="similarity">
    <text evidence="1">Belongs to the class I-like SAM-binding methyltransferase superfamily. Cation-dependent O-methyltransferase family. CCoAMT subfamily.</text>
</comment>
<sequence>MEQKTAPTQYEVKVQYNNSILNYAIDHSDQLTDIQKELIQFTKENIERHIMLTQAEQCSFFKLLIQVLNAKKTIDIGVFTGLSSLTAALAMGDEGRVVACDVSTEYTQHALKFWAKAGVDHKINLKIQPASKTLQELIDQGEENTYDFVFIDADKTGYDTYYELSLKLIRKGGIIAIDNVLQHGRVADPNANVEPNLVAIRALNDKILADKRVTKSLLPIADGITLITKIN</sequence>
<dbReference type="EC" id="2.1.1.104"/>
<dbReference type="EMBL" id="AAFI02000013">
    <property type="protein sequence ID" value="EAL69501.1"/>
    <property type="molecule type" value="Genomic_DNA"/>
</dbReference>
<dbReference type="RefSeq" id="XP_643597.1">
    <property type="nucleotide sequence ID" value="XM_638505.1"/>
</dbReference>
<dbReference type="SMR" id="Q86IC8"/>
<dbReference type="FunCoup" id="Q86IC8">
    <property type="interactions" value="74"/>
</dbReference>
<dbReference type="STRING" id="44689.Q86IC8"/>
<dbReference type="PaxDb" id="44689-DDB0229909"/>
<dbReference type="EnsemblProtists" id="EAL69501">
    <property type="protein sequence ID" value="EAL69501"/>
    <property type="gene ID" value="DDB_G0275501"/>
</dbReference>
<dbReference type="GeneID" id="8620184"/>
<dbReference type="KEGG" id="ddi:DDB_G0275501"/>
<dbReference type="dictyBase" id="DDB_G0275501">
    <property type="gene designation" value="omt6"/>
</dbReference>
<dbReference type="VEuPathDB" id="AmoebaDB:DDB_G0275501"/>
<dbReference type="eggNOG" id="KOG1663">
    <property type="taxonomic scope" value="Eukaryota"/>
</dbReference>
<dbReference type="HOGENOM" id="CLU_067676_5_1_1"/>
<dbReference type="InParanoid" id="Q86IC8"/>
<dbReference type="OMA" id="VCFEGVF"/>
<dbReference type="PhylomeDB" id="Q86IC8"/>
<dbReference type="PRO" id="PR:Q86IC8"/>
<dbReference type="Proteomes" id="UP000002195">
    <property type="component" value="Chromosome 2"/>
</dbReference>
<dbReference type="GO" id="GO:0045335">
    <property type="term" value="C:phagocytic vesicle"/>
    <property type="evidence" value="ECO:0007005"/>
    <property type="project" value="dictyBase"/>
</dbReference>
<dbReference type="GO" id="GO:0042409">
    <property type="term" value="F:caffeoyl-CoA O-methyltransferase activity"/>
    <property type="evidence" value="ECO:0007669"/>
    <property type="project" value="UniProtKB-EC"/>
</dbReference>
<dbReference type="GO" id="GO:0046872">
    <property type="term" value="F:metal ion binding"/>
    <property type="evidence" value="ECO:0007669"/>
    <property type="project" value="UniProtKB-KW"/>
</dbReference>
<dbReference type="GO" id="GO:0008757">
    <property type="term" value="F:S-adenosylmethionine-dependent methyltransferase activity"/>
    <property type="evidence" value="ECO:0000318"/>
    <property type="project" value="GO_Central"/>
</dbReference>
<dbReference type="GO" id="GO:0032259">
    <property type="term" value="P:methylation"/>
    <property type="evidence" value="ECO:0007669"/>
    <property type="project" value="UniProtKB-KW"/>
</dbReference>
<dbReference type="GO" id="GO:0009617">
    <property type="term" value="P:response to bacterium"/>
    <property type="evidence" value="ECO:0007007"/>
    <property type="project" value="dictyBase"/>
</dbReference>
<dbReference type="Gene3D" id="3.40.50.150">
    <property type="entry name" value="Vaccinia Virus protein VP39"/>
    <property type="match status" value="1"/>
</dbReference>
<dbReference type="InterPro" id="IPR050362">
    <property type="entry name" value="Cation-dep_OMT"/>
</dbReference>
<dbReference type="InterPro" id="IPR029063">
    <property type="entry name" value="SAM-dependent_MTases_sf"/>
</dbReference>
<dbReference type="InterPro" id="IPR002935">
    <property type="entry name" value="SAM_O-MeTrfase"/>
</dbReference>
<dbReference type="PANTHER" id="PTHR10509:SF99">
    <property type="entry name" value="CAFFEOYL-COA O-METHYLTRANSFERASE 1-RELATED"/>
    <property type="match status" value="1"/>
</dbReference>
<dbReference type="PANTHER" id="PTHR10509">
    <property type="entry name" value="O-METHYLTRANSFERASE-RELATED"/>
    <property type="match status" value="1"/>
</dbReference>
<dbReference type="Pfam" id="PF01596">
    <property type="entry name" value="Methyltransf_3"/>
    <property type="match status" value="1"/>
</dbReference>
<dbReference type="SUPFAM" id="SSF53335">
    <property type="entry name" value="S-adenosyl-L-methionine-dependent methyltransferases"/>
    <property type="match status" value="1"/>
</dbReference>
<dbReference type="PROSITE" id="PS51682">
    <property type="entry name" value="SAM_OMT_I"/>
    <property type="match status" value="1"/>
</dbReference>
<gene>
    <name type="primary">omt6</name>
    <name type="ORF">DDB_G0275501</name>
</gene>
<proteinExistence type="evidence at protein level"/>
<name>CAMT2_DICDI</name>
<reference key="1">
    <citation type="journal article" date="2002" name="Nature">
        <title>Sequence and analysis of chromosome 2 of Dictyostelium discoideum.</title>
        <authorList>
            <person name="Gloeckner G."/>
            <person name="Eichinger L."/>
            <person name="Szafranski K."/>
            <person name="Pachebat J.A."/>
            <person name="Bankier A.T."/>
            <person name="Dear P.H."/>
            <person name="Lehmann R."/>
            <person name="Baumgart C."/>
            <person name="Parra G."/>
            <person name="Abril J.F."/>
            <person name="Guigo R."/>
            <person name="Kumpf K."/>
            <person name="Tunggal B."/>
            <person name="Cox E.C."/>
            <person name="Quail M.A."/>
            <person name="Platzer M."/>
            <person name="Rosenthal A."/>
            <person name="Noegel A.A."/>
        </authorList>
    </citation>
    <scope>NUCLEOTIDE SEQUENCE [LARGE SCALE GENOMIC DNA]</scope>
    <source>
        <strain>AX4</strain>
    </source>
</reference>
<reference key="2">
    <citation type="journal article" date="2005" name="Nature">
        <title>The genome of the social amoeba Dictyostelium discoideum.</title>
        <authorList>
            <person name="Eichinger L."/>
            <person name="Pachebat J.A."/>
            <person name="Gloeckner G."/>
            <person name="Rajandream M.A."/>
            <person name="Sucgang R."/>
            <person name="Berriman M."/>
            <person name="Song J."/>
            <person name="Olsen R."/>
            <person name="Szafranski K."/>
            <person name="Xu Q."/>
            <person name="Tunggal B."/>
            <person name="Kummerfeld S."/>
            <person name="Madera M."/>
            <person name="Konfortov B.A."/>
            <person name="Rivero F."/>
            <person name="Bankier A.T."/>
            <person name="Lehmann R."/>
            <person name="Hamlin N."/>
            <person name="Davies R."/>
            <person name="Gaudet P."/>
            <person name="Fey P."/>
            <person name="Pilcher K."/>
            <person name="Chen G."/>
            <person name="Saunders D."/>
            <person name="Sodergren E.J."/>
            <person name="Davis P."/>
            <person name="Kerhornou A."/>
            <person name="Nie X."/>
            <person name="Hall N."/>
            <person name="Anjard C."/>
            <person name="Hemphill L."/>
            <person name="Bason N."/>
            <person name="Farbrother P."/>
            <person name="Desany B."/>
            <person name="Just E."/>
            <person name="Morio T."/>
            <person name="Rost R."/>
            <person name="Churcher C.M."/>
            <person name="Cooper J."/>
            <person name="Haydock S."/>
            <person name="van Driessche N."/>
            <person name="Cronin A."/>
            <person name="Goodhead I."/>
            <person name="Muzny D.M."/>
            <person name="Mourier T."/>
            <person name="Pain A."/>
            <person name="Lu M."/>
            <person name="Harper D."/>
            <person name="Lindsay R."/>
            <person name="Hauser H."/>
            <person name="James K.D."/>
            <person name="Quiles M."/>
            <person name="Madan Babu M."/>
            <person name="Saito T."/>
            <person name="Buchrieser C."/>
            <person name="Wardroper A."/>
            <person name="Felder M."/>
            <person name="Thangavelu M."/>
            <person name="Johnson D."/>
            <person name="Knights A."/>
            <person name="Loulseged H."/>
            <person name="Mungall K.L."/>
            <person name="Oliver K."/>
            <person name="Price C."/>
            <person name="Quail M.A."/>
            <person name="Urushihara H."/>
            <person name="Hernandez J."/>
            <person name="Rabbinowitsch E."/>
            <person name="Steffen D."/>
            <person name="Sanders M."/>
            <person name="Ma J."/>
            <person name="Kohara Y."/>
            <person name="Sharp S."/>
            <person name="Simmonds M.N."/>
            <person name="Spiegler S."/>
            <person name="Tivey A."/>
            <person name="Sugano S."/>
            <person name="White B."/>
            <person name="Walker D."/>
            <person name="Woodward J.R."/>
            <person name="Winckler T."/>
            <person name="Tanaka Y."/>
            <person name="Shaulsky G."/>
            <person name="Schleicher M."/>
            <person name="Weinstock G.M."/>
            <person name="Rosenthal A."/>
            <person name="Cox E.C."/>
            <person name="Chisholm R.L."/>
            <person name="Gibbs R.A."/>
            <person name="Loomis W.F."/>
            <person name="Platzer M."/>
            <person name="Kay R.R."/>
            <person name="Williams J.G."/>
            <person name="Dear P.H."/>
            <person name="Noegel A.A."/>
            <person name="Barrell B.G."/>
            <person name="Kuspa A."/>
        </authorList>
    </citation>
    <scope>NUCLEOTIDE SEQUENCE [LARGE SCALE GENOMIC DNA]</scope>
    <source>
        <strain>AX4</strain>
    </source>
</reference>
<reference key="3">
    <citation type="journal article" date="2006" name="Mol. Cell. Proteomics">
        <title>Proteomics fingerprinting of phagosome maturation and evidence for the role of a Galpha during uptake.</title>
        <authorList>
            <person name="Gotthardt D."/>
            <person name="Blancheteau V."/>
            <person name="Bosserhoff A."/>
            <person name="Ruppert T."/>
            <person name="Delorenzi M."/>
            <person name="Soldati T."/>
        </authorList>
    </citation>
    <scope>IDENTIFICATION BY MASS SPECTROMETRY [LARGE SCALE ANALYSIS]</scope>
    <source>
        <strain>AX2</strain>
    </source>
</reference>
<accession>Q86IC8</accession>
<accession>Q552T4</accession>
<feature type="chain" id="PRO_0000371325" description="Probable caffeoyl-CoA O-methyltransferase 2">
    <location>
        <begin position="1"/>
        <end position="231"/>
    </location>
</feature>
<feature type="binding site" evidence="1">
    <location>
        <position position="53"/>
    </location>
    <ligand>
        <name>S-adenosyl-L-methionine</name>
        <dbReference type="ChEBI" id="CHEBI:59789"/>
    </ligand>
</feature>
<feature type="binding site" evidence="1">
    <location>
        <position position="75"/>
    </location>
    <ligand>
        <name>S-adenosyl-L-methionine</name>
        <dbReference type="ChEBI" id="CHEBI:59789"/>
    </ligand>
</feature>
<feature type="binding site" evidence="1">
    <location>
        <begin position="77"/>
        <end position="78"/>
    </location>
    <ligand>
        <name>S-adenosyl-L-methionine</name>
        <dbReference type="ChEBI" id="CHEBI:59789"/>
    </ligand>
</feature>
<feature type="binding site" evidence="1">
    <location>
        <position position="83"/>
    </location>
    <ligand>
        <name>S-adenosyl-L-methionine</name>
        <dbReference type="ChEBI" id="CHEBI:59789"/>
    </ligand>
</feature>
<feature type="binding site" evidence="1">
    <location>
        <position position="101"/>
    </location>
    <ligand>
        <name>S-adenosyl-L-methionine</name>
        <dbReference type="ChEBI" id="CHEBI:59789"/>
    </ligand>
</feature>
<feature type="binding site" evidence="1">
    <location>
        <position position="130"/>
    </location>
    <ligand>
        <name>S-adenosyl-L-methionine</name>
        <dbReference type="ChEBI" id="CHEBI:59789"/>
    </ligand>
</feature>
<feature type="binding site" evidence="1">
    <location>
        <position position="152"/>
    </location>
    <ligand>
        <name>a divalent metal cation</name>
        <dbReference type="ChEBI" id="CHEBI:60240"/>
    </ligand>
</feature>
<feature type="binding site" evidence="1">
    <location>
        <position position="152"/>
    </location>
    <ligand>
        <name>S-adenosyl-L-methionine</name>
        <dbReference type="ChEBI" id="CHEBI:59789"/>
    </ligand>
</feature>
<feature type="binding site" evidence="1">
    <location>
        <position position="154"/>
    </location>
    <ligand>
        <name>S-adenosyl-L-methionine</name>
        <dbReference type="ChEBI" id="CHEBI:59789"/>
    </ligand>
</feature>
<feature type="binding site" evidence="1">
    <location>
        <position position="161"/>
    </location>
    <ligand>
        <name>S-adenosyl-L-methionine</name>
        <dbReference type="ChEBI" id="CHEBI:59789"/>
    </ligand>
</feature>
<feature type="binding site" evidence="1">
    <location>
        <position position="178"/>
    </location>
    <ligand>
        <name>a divalent metal cation</name>
        <dbReference type="ChEBI" id="CHEBI:60240"/>
    </ligand>
</feature>
<feature type="binding site" evidence="1">
    <location>
        <position position="179"/>
    </location>
    <ligand>
        <name>a divalent metal cation</name>
        <dbReference type="ChEBI" id="CHEBI:60240"/>
    </ligand>
</feature>